<evidence type="ECO:0000255" key="1">
    <source>
        <dbReference type="HAMAP-Rule" id="MF_00184"/>
    </source>
</evidence>
<evidence type="ECO:0000255" key="2">
    <source>
        <dbReference type="PROSITE-ProRule" id="PRU01228"/>
    </source>
</evidence>
<keyword id="KW-0030">Aminoacyl-tRNA synthetase</keyword>
<keyword id="KW-0067">ATP-binding</keyword>
<keyword id="KW-0963">Cytoplasm</keyword>
<keyword id="KW-0436">Ligase</keyword>
<keyword id="KW-0479">Metal-binding</keyword>
<keyword id="KW-0547">Nucleotide-binding</keyword>
<keyword id="KW-0648">Protein biosynthesis</keyword>
<keyword id="KW-0694">RNA-binding</keyword>
<keyword id="KW-0820">tRNA-binding</keyword>
<keyword id="KW-0862">Zinc</keyword>
<protein>
    <recommendedName>
        <fullName evidence="1">Threonine--tRNA ligase</fullName>
        <ecNumber evidence="1">6.1.1.3</ecNumber>
    </recommendedName>
    <alternativeName>
        <fullName evidence="1">Threonyl-tRNA synthetase</fullName>
        <shortName evidence="1">ThrRS</shortName>
    </alternativeName>
</protein>
<name>SYT_SALDC</name>
<reference key="1">
    <citation type="journal article" date="2011" name="J. Bacteriol.">
        <title>Comparative genomics of 28 Salmonella enterica isolates: evidence for CRISPR-mediated adaptive sublineage evolution.</title>
        <authorList>
            <person name="Fricke W.F."/>
            <person name="Mammel M.K."/>
            <person name="McDermott P.F."/>
            <person name="Tartera C."/>
            <person name="White D.G."/>
            <person name="Leclerc J.E."/>
            <person name="Ravel J."/>
            <person name="Cebula T.A."/>
        </authorList>
    </citation>
    <scope>NUCLEOTIDE SEQUENCE [LARGE SCALE GENOMIC DNA]</scope>
    <source>
        <strain>CT_02021853</strain>
    </source>
</reference>
<organism>
    <name type="scientific">Salmonella dublin (strain CT_02021853)</name>
    <dbReference type="NCBI Taxonomy" id="439851"/>
    <lineage>
        <taxon>Bacteria</taxon>
        <taxon>Pseudomonadati</taxon>
        <taxon>Pseudomonadota</taxon>
        <taxon>Gammaproteobacteria</taxon>
        <taxon>Enterobacterales</taxon>
        <taxon>Enterobacteriaceae</taxon>
        <taxon>Salmonella</taxon>
    </lineage>
</organism>
<accession>B5FJA8</accession>
<dbReference type="EC" id="6.1.1.3" evidence="1"/>
<dbReference type="EMBL" id="CP001144">
    <property type="protein sequence ID" value="ACH75305.1"/>
    <property type="molecule type" value="Genomic_DNA"/>
</dbReference>
<dbReference type="RefSeq" id="WP_001144217.1">
    <property type="nucleotide sequence ID" value="NC_011205.1"/>
</dbReference>
<dbReference type="SMR" id="B5FJA8"/>
<dbReference type="KEGG" id="sed:SeD_A2012"/>
<dbReference type="HOGENOM" id="CLU_008554_0_1_6"/>
<dbReference type="Proteomes" id="UP000008322">
    <property type="component" value="Chromosome"/>
</dbReference>
<dbReference type="GO" id="GO:0005829">
    <property type="term" value="C:cytosol"/>
    <property type="evidence" value="ECO:0007669"/>
    <property type="project" value="TreeGrafter"/>
</dbReference>
<dbReference type="GO" id="GO:0005524">
    <property type="term" value="F:ATP binding"/>
    <property type="evidence" value="ECO:0007669"/>
    <property type="project" value="UniProtKB-UniRule"/>
</dbReference>
<dbReference type="GO" id="GO:0046872">
    <property type="term" value="F:metal ion binding"/>
    <property type="evidence" value="ECO:0007669"/>
    <property type="project" value="UniProtKB-KW"/>
</dbReference>
<dbReference type="GO" id="GO:0004829">
    <property type="term" value="F:threonine-tRNA ligase activity"/>
    <property type="evidence" value="ECO:0007669"/>
    <property type="project" value="UniProtKB-UniRule"/>
</dbReference>
<dbReference type="GO" id="GO:0000049">
    <property type="term" value="F:tRNA binding"/>
    <property type="evidence" value="ECO:0007669"/>
    <property type="project" value="UniProtKB-KW"/>
</dbReference>
<dbReference type="GO" id="GO:0006435">
    <property type="term" value="P:threonyl-tRNA aminoacylation"/>
    <property type="evidence" value="ECO:0007669"/>
    <property type="project" value="UniProtKB-UniRule"/>
</dbReference>
<dbReference type="CDD" id="cd01667">
    <property type="entry name" value="TGS_ThrRS"/>
    <property type="match status" value="1"/>
</dbReference>
<dbReference type="CDD" id="cd00860">
    <property type="entry name" value="ThrRS_anticodon"/>
    <property type="match status" value="1"/>
</dbReference>
<dbReference type="CDD" id="cd00771">
    <property type="entry name" value="ThrRS_core"/>
    <property type="match status" value="1"/>
</dbReference>
<dbReference type="FunFam" id="3.10.20.30:FF:000005">
    <property type="entry name" value="Threonine--tRNA ligase"/>
    <property type="match status" value="1"/>
</dbReference>
<dbReference type="FunFam" id="3.30.54.20:FF:000002">
    <property type="entry name" value="Threonine--tRNA ligase"/>
    <property type="match status" value="1"/>
</dbReference>
<dbReference type="FunFam" id="3.30.930.10:FF:000002">
    <property type="entry name" value="Threonine--tRNA ligase"/>
    <property type="match status" value="1"/>
</dbReference>
<dbReference type="FunFam" id="3.40.50.800:FF:000001">
    <property type="entry name" value="Threonine--tRNA ligase"/>
    <property type="match status" value="1"/>
</dbReference>
<dbReference type="FunFam" id="3.30.980.10:FF:000005">
    <property type="entry name" value="Threonyl-tRNA synthetase, mitochondrial"/>
    <property type="match status" value="1"/>
</dbReference>
<dbReference type="Gene3D" id="3.10.20.30">
    <property type="match status" value="1"/>
</dbReference>
<dbReference type="Gene3D" id="3.30.54.20">
    <property type="match status" value="1"/>
</dbReference>
<dbReference type="Gene3D" id="3.40.50.800">
    <property type="entry name" value="Anticodon-binding domain"/>
    <property type="match status" value="1"/>
</dbReference>
<dbReference type="Gene3D" id="3.30.930.10">
    <property type="entry name" value="Bira Bifunctional Protein, Domain 2"/>
    <property type="match status" value="1"/>
</dbReference>
<dbReference type="Gene3D" id="3.30.980.10">
    <property type="entry name" value="Threonyl-trna Synthetase, Chain A, domain 2"/>
    <property type="match status" value="1"/>
</dbReference>
<dbReference type="HAMAP" id="MF_00184">
    <property type="entry name" value="Thr_tRNA_synth"/>
    <property type="match status" value="1"/>
</dbReference>
<dbReference type="InterPro" id="IPR002314">
    <property type="entry name" value="aa-tRNA-synt_IIb"/>
</dbReference>
<dbReference type="InterPro" id="IPR006195">
    <property type="entry name" value="aa-tRNA-synth_II"/>
</dbReference>
<dbReference type="InterPro" id="IPR045864">
    <property type="entry name" value="aa-tRNA-synth_II/BPL/LPL"/>
</dbReference>
<dbReference type="InterPro" id="IPR004154">
    <property type="entry name" value="Anticodon-bd"/>
</dbReference>
<dbReference type="InterPro" id="IPR036621">
    <property type="entry name" value="Anticodon-bd_dom_sf"/>
</dbReference>
<dbReference type="InterPro" id="IPR012675">
    <property type="entry name" value="Beta-grasp_dom_sf"/>
</dbReference>
<dbReference type="InterPro" id="IPR004095">
    <property type="entry name" value="TGS"/>
</dbReference>
<dbReference type="InterPro" id="IPR012676">
    <property type="entry name" value="TGS-like"/>
</dbReference>
<dbReference type="InterPro" id="IPR002320">
    <property type="entry name" value="Thr-tRNA-ligase_IIa"/>
</dbReference>
<dbReference type="InterPro" id="IPR018163">
    <property type="entry name" value="Thr/Ala-tRNA-synth_IIc_edit"/>
</dbReference>
<dbReference type="InterPro" id="IPR047246">
    <property type="entry name" value="ThrRS_anticodon"/>
</dbReference>
<dbReference type="InterPro" id="IPR033728">
    <property type="entry name" value="ThrRS_core"/>
</dbReference>
<dbReference type="InterPro" id="IPR012947">
    <property type="entry name" value="tRNA_SAD"/>
</dbReference>
<dbReference type="NCBIfam" id="TIGR00418">
    <property type="entry name" value="thrS"/>
    <property type="match status" value="1"/>
</dbReference>
<dbReference type="PANTHER" id="PTHR11451:SF44">
    <property type="entry name" value="THREONINE--TRNA LIGASE, CHLOROPLASTIC_MITOCHONDRIAL 2"/>
    <property type="match status" value="1"/>
</dbReference>
<dbReference type="PANTHER" id="PTHR11451">
    <property type="entry name" value="THREONINE-TRNA LIGASE"/>
    <property type="match status" value="1"/>
</dbReference>
<dbReference type="Pfam" id="PF03129">
    <property type="entry name" value="HGTP_anticodon"/>
    <property type="match status" value="1"/>
</dbReference>
<dbReference type="Pfam" id="PF02824">
    <property type="entry name" value="TGS"/>
    <property type="match status" value="1"/>
</dbReference>
<dbReference type="Pfam" id="PF00587">
    <property type="entry name" value="tRNA-synt_2b"/>
    <property type="match status" value="1"/>
</dbReference>
<dbReference type="Pfam" id="PF07973">
    <property type="entry name" value="tRNA_SAD"/>
    <property type="match status" value="1"/>
</dbReference>
<dbReference type="PRINTS" id="PR01047">
    <property type="entry name" value="TRNASYNTHTHR"/>
</dbReference>
<dbReference type="SMART" id="SM00863">
    <property type="entry name" value="tRNA_SAD"/>
    <property type="match status" value="1"/>
</dbReference>
<dbReference type="SUPFAM" id="SSF52954">
    <property type="entry name" value="Class II aaRS ABD-related"/>
    <property type="match status" value="1"/>
</dbReference>
<dbReference type="SUPFAM" id="SSF55681">
    <property type="entry name" value="Class II aaRS and biotin synthetases"/>
    <property type="match status" value="1"/>
</dbReference>
<dbReference type="SUPFAM" id="SSF81271">
    <property type="entry name" value="TGS-like"/>
    <property type="match status" value="1"/>
</dbReference>
<dbReference type="SUPFAM" id="SSF55186">
    <property type="entry name" value="ThrRS/AlaRS common domain"/>
    <property type="match status" value="1"/>
</dbReference>
<dbReference type="PROSITE" id="PS50862">
    <property type="entry name" value="AA_TRNA_LIGASE_II"/>
    <property type="match status" value="1"/>
</dbReference>
<dbReference type="PROSITE" id="PS51880">
    <property type="entry name" value="TGS"/>
    <property type="match status" value="1"/>
</dbReference>
<gene>
    <name evidence="1" type="primary">thrS</name>
    <name type="ordered locus">SeD_A2012</name>
</gene>
<comment type="function">
    <text evidence="1">Catalyzes the attachment of threonine to tRNA(Thr) in a two-step reaction: L-threonine is first activated by ATP to form Thr-AMP and then transferred to the acceptor end of tRNA(Thr). Also edits incorrectly charged L-seryl-tRNA(Thr).</text>
</comment>
<comment type="catalytic activity">
    <reaction evidence="1">
        <text>tRNA(Thr) + L-threonine + ATP = L-threonyl-tRNA(Thr) + AMP + diphosphate + H(+)</text>
        <dbReference type="Rhea" id="RHEA:24624"/>
        <dbReference type="Rhea" id="RHEA-COMP:9670"/>
        <dbReference type="Rhea" id="RHEA-COMP:9704"/>
        <dbReference type="ChEBI" id="CHEBI:15378"/>
        <dbReference type="ChEBI" id="CHEBI:30616"/>
        <dbReference type="ChEBI" id="CHEBI:33019"/>
        <dbReference type="ChEBI" id="CHEBI:57926"/>
        <dbReference type="ChEBI" id="CHEBI:78442"/>
        <dbReference type="ChEBI" id="CHEBI:78534"/>
        <dbReference type="ChEBI" id="CHEBI:456215"/>
        <dbReference type="EC" id="6.1.1.3"/>
    </reaction>
</comment>
<comment type="cofactor">
    <cofactor evidence="1">
        <name>Zn(2+)</name>
        <dbReference type="ChEBI" id="CHEBI:29105"/>
    </cofactor>
    <text evidence="1">Binds 1 zinc ion per subunit.</text>
</comment>
<comment type="subunit">
    <text evidence="1">Homodimer.</text>
</comment>
<comment type="subcellular location">
    <subcellularLocation>
        <location evidence="1">Cytoplasm</location>
    </subcellularLocation>
</comment>
<comment type="similarity">
    <text evidence="1">Belongs to the class-II aminoacyl-tRNA synthetase family.</text>
</comment>
<sequence>MPVITLPDGSQRHYDHPVSPMDVALDIGPGLAKATIAGRVNGELVDASDLIENDATLAIITAKDEEGLEIIRHSCAHLLGHAIKQLWPHTKMAIGPVVDNGFYYDVDLDRTLTQEDVEALEKRMHELAEKNYDVIKKKVSWHDARETFVKRGETYKVAILDENIAHDDKPGLYHHEEYVDMCRGPHVPNMRFCHHFKLMKTAGAYWRGDSNNKMLQRIYGTAWADKKALNAYLQRLEEAAKRDHRKIGKQLDLYHMQEEAPGMVFWHNDGWTIFRELEVFVRSKLKEYQYQEVKGPFMMDRVLWEKTGHWDNYKDAMFTTSSENREYCIKPMNCPGHVQIFNQGLKSYRDLPLRMAEFGSCHRNEPSGALHGLMRVRGFTQDDAHIFCTEEQIRDEVNACIRMVYDMYSTFGFEKIVVKLSTRPDKRIGSDEMWDRAEADLAVALEENNIPFEYQLGEGAFYGPKIEFTLYDCLDRAWQCGTVQLDFSLPSRLSASYVGEDNERKVPVMIHRAILGSMERFIGILTEEFAGFFPTWLAPVQVVVMNITDSQSEYVNELTQKLQNAGIRVKADLRNEKIGFKIREHTLRRVPYMLVCGDKEVEAGKVAVRTRRGKDLGSLDVNDVIEKLQQEIRSRSLQQLEE</sequence>
<proteinExistence type="inferred from homology"/>
<feature type="chain" id="PRO_1000098606" description="Threonine--tRNA ligase">
    <location>
        <begin position="1"/>
        <end position="642"/>
    </location>
</feature>
<feature type="domain" description="TGS" evidence="2">
    <location>
        <begin position="1"/>
        <end position="61"/>
    </location>
</feature>
<feature type="region of interest" description="Catalytic" evidence="1">
    <location>
        <begin position="243"/>
        <end position="534"/>
    </location>
</feature>
<feature type="binding site" evidence="1">
    <location>
        <position position="334"/>
    </location>
    <ligand>
        <name>Zn(2+)</name>
        <dbReference type="ChEBI" id="CHEBI:29105"/>
    </ligand>
</feature>
<feature type="binding site" evidence="1">
    <location>
        <position position="385"/>
    </location>
    <ligand>
        <name>Zn(2+)</name>
        <dbReference type="ChEBI" id="CHEBI:29105"/>
    </ligand>
</feature>
<feature type="binding site" evidence="1">
    <location>
        <position position="511"/>
    </location>
    <ligand>
        <name>Zn(2+)</name>
        <dbReference type="ChEBI" id="CHEBI:29105"/>
    </ligand>
</feature>